<sequence length="158" mass="16562">MTLKTIEGTFTAAKGRYALVVGRFNSFVVESLVQGAIDTLVRHGVEQSELTIIRVPGAFEIPLVAQKVAQRGEFDAIIALGAVIRGGTPHFEYVAGECTKGLAQVSLQFGVPVAFGVLTVDSIEQAIERSGTKAGNKGAEAALSALEMVSLMAALEAK</sequence>
<accession>C1DLH8</accession>
<keyword id="KW-0686">Riboflavin biosynthesis</keyword>
<keyword id="KW-0808">Transferase</keyword>
<name>RISB_AZOVD</name>
<protein>
    <recommendedName>
        <fullName evidence="1">6,7-dimethyl-8-ribityllumazine synthase</fullName>
        <shortName evidence="1">DMRL synthase</shortName>
        <shortName evidence="1">LS</shortName>
        <shortName evidence="1">Lumazine synthase</shortName>
        <ecNumber evidence="1">2.5.1.78</ecNumber>
    </recommendedName>
</protein>
<dbReference type="EC" id="2.5.1.78" evidence="1"/>
<dbReference type="EMBL" id="CP001157">
    <property type="protein sequence ID" value="ACO76926.1"/>
    <property type="molecule type" value="Genomic_DNA"/>
</dbReference>
<dbReference type="RefSeq" id="WP_012699351.1">
    <property type="nucleotide sequence ID" value="NC_012560.1"/>
</dbReference>
<dbReference type="SMR" id="C1DLH8"/>
<dbReference type="STRING" id="322710.Avin_06750"/>
<dbReference type="EnsemblBacteria" id="ACO76926">
    <property type="protein sequence ID" value="ACO76926"/>
    <property type="gene ID" value="Avin_06750"/>
</dbReference>
<dbReference type="GeneID" id="88184084"/>
<dbReference type="KEGG" id="avn:Avin_06750"/>
<dbReference type="eggNOG" id="COG0054">
    <property type="taxonomic scope" value="Bacteria"/>
</dbReference>
<dbReference type="HOGENOM" id="CLU_089358_1_1_6"/>
<dbReference type="OrthoDB" id="9809709at2"/>
<dbReference type="UniPathway" id="UPA00275">
    <property type="reaction ID" value="UER00404"/>
</dbReference>
<dbReference type="Proteomes" id="UP000002424">
    <property type="component" value="Chromosome"/>
</dbReference>
<dbReference type="GO" id="GO:0005829">
    <property type="term" value="C:cytosol"/>
    <property type="evidence" value="ECO:0007669"/>
    <property type="project" value="TreeGrafter"/>
</dbReference>
<dbReference type="GO" id="GO:0009349">
    <property type="term" value="C:riboflavin synthase complex"/>
    <property type="evidence" value="ECO:0007669"/>
    <property type="project" value="InterPro"/>
</dbReference>
<dbReference type="GO" id="GO:0000906">
    <property type="term" value="F:6,7-dimethyl-8-ribityllumazine synthase activity"/>
    <property type="evidence" value="ECO:0007669"/>
    <property type="project" value="UniProtKB-UniRule"/>
</dbReference>
<dbReference type="GO" id="GO:0009231">
    <property type="term" value="P:riboflavin biosynthetic process"/>
    <property type="evidence" value="ECO:0007669"/>
    <property type="project" value="UniProtKB-UniRule"/>
</dbReference>
<dbReference type="CDD" id="cd09209">
    <property type="entry name" value="Lumazine_synthase-I"/>
    <property type="match status" value="1"/>
</dbReference>
<dbReference type="FunFam" id="3.40.50.960:FF:000001">
    <property type="entry name" value="6,7-dimethyl-8-ribityllumazine synthase"/>
    <property type="match status" value="1"/>
</dbReference>
<dbReference type="Gene3D" id="3.40.50.960">
    <property type="entry name" value="Lumazine/riboflavin synthase"/>
    <property type="match status" value="1"/>
</dbReference>
<dbReference type="HAMAP" id="MF_00178">
    <property type="entry name" value="Lumazine_synth"/>
    <property type="match status" value="1"/>
</dbReference>
<dbReference type="InterPro" id="IPR034964">
    <property type="entry name" value="LS"/>
</dbReference>
<dbReference type="InterPro" id="IPR002180">
    <property type="entry name" value="LS/RS"/>
</dbReference>
<dbReference type="InterPro" id="IPR036467">
    <property type="entry name" value="LS/RS_sf"/>
</dbReference>
<dbReference type="NCBIfam" id="TIGR00114">
    <property type="entry name" value="lumazine-synth"/>
    <property type="match status" value="1"/>
</dbReference>
<dbReference type="NCBIfam" id="NF000812">
    <property type="entry name" value="PRK00061.1-4"/>
    <property type="match status" value="1"/>
</dbReference>
<dbReference type="PANTHER" id="PTHR21058:SF0">
    <property type="entry name" value="6,7-DIMETHYL-8-RIBITYLLUMAZINE SYNTHASE"/>
    <property type="match status" value="1"/>
</dbReference>
<dbReference type="PANTHER" id="PTHR21058">
    <property type="entry name" value="6,7-DIMETHYL-8-RIBITYLLUMAZINE SYNTHASE DMRL SYNTHASE LUMAZINE SYNTHASE"/>
    <property type="match status" value="1"/>
</dbReference>
<dbReference type="Pfam" id="PF00885">
    <property type="entry name" value="DMRL_synthase"/>
    <property type="match status" value="1"/>
</dbReference>
<dbReference type="SUPFAM" id="SSF52121">
    <property type="entry name" value="Lumazine synthase"/>
    <property type="match status" value="1"/>
</dbReference>
<comment type="function">
    <text evidence="1">Catalyzes the formation of 6,7-dimethyl-8-ribityllumazine by condensation of 5-amino-6-(D-ribitylamino)uracil with 3,4-dihydroxy-2-butanone 4-phosphate. This is the penultimate step in the biosynthesis of riboflavin.</text>
</comment>
<comment type="catalytic activity">
    <reaction evidence="1">
        <text>(2S)-2-hydroxy-3-oxobutyl phosphate + 5-amino-6-(D-ribitylamino)uracil = 6,7-dimethyl-8-(1-D-ribityl)lumazine + phosphate + 2 H2O + H(+)</text>
        <dbReference type="Rhea" id="RHEA:26152"/>
        <dbReference type="ChEBI" id="CHEBI:15377"/>
        <dbReference type="ChEBI" id="CHEBI:15378"/>
        <dbReference type="ChEBI" id="CHEBI:15934"/>
        <dbReference type="ChEBI" id="CHEBI:43474"/>
        <dbReference type="ChEBI" id="CHEBI:58201"/>
        <dbReference type="ChEBI" id="CHEBI:58830"/>
        <dbReference type="EC" id="2.5.1.78"/>
    </reaction>
</comment>
<comment type="pathway">
    <text evidence="1">Cofactor biosynthesis; riboflavin biosynthesis; riboflavin from 2-hydroxy-3-oxobutyl phosphate and 5-amino-6-(D-ribitylamino)uracil: step 1/2.</text>
</comment>
<comment type="subunit">
    <text evidence="1">Forms an icosahedral capsid composed of 60 subunits, arranged as a dodecamer of pentamers.</text>
</comment>
<comment type="similarity">
    <text evidence="1">Belongs to the DMRL synthase family.</text>
</comment>
<gene>
    <name evidence="1" type="primary">ribH</name>
    <name type="ordered locus">Avin_06750</name>
</gene>
<proteinExistence type="inferred from homology"/>
<organism>
    <name type="scientific">Azotobacter vinelandii (strain DJ / ATCC BAA-1303)</name>
    <dbReference type="NCBI Taxonomy" id="322710"/>
    <lineage>
        <taxon>Bacteria</taxon>
        <taxon>Pseudomonadati</taxon>
        <taxon>Pseudomonadota</taxon>
        <taxon>Gammaproteobacteria</taxon>
        <taxon>Pseudomonadales</taxon>
        <taxon>Pseudomonadaceae</taxon>
        <taxon>Azotobacter</taxon>
    </lineage>
</organism>
<feature type="chain" id="PRO_1000203782" description="6,7-dimethyl-8-ribityllumazine synthase">
    <location>
        <begin position="1"/>
        <end position="158"/>
    </location>
</feature>
<feature type="active site" description="Proton donor" evidence="1">
    <location>
        <position position="90"/>
    </location>
</feature>
<feature type="binding site" evidence="1">
    <location>
        <position position="24"/>
    </location>
    <ligand>
        <name>5-amino-6-(D-ribitylamino)uracil</name>
        <dbReference type="ChEBI" id="CHEBI:15934"/>
    </ligand>
</feature>
<feature type="binding site" evidence="1">
    <location>
        <begin position="58"/>
        <end position="60"/>
    </location>
    <ligand>
        <name>5-amino-6-(D-ribitylamino)uracil</name>
        <dbReference type="ChEBI" id="CHEBI:15934"/>
    </ligand>
</feature>
<feature type="binding site" evidence="1">
    <location>
        <begin position="82"/>
        <end position="84"/>
    </location>
    <ligand>
        <name>5-amino-6-(D-ribitylamino)uracil</name>
        <dbReference type="ChEBI" id="CHEBI:15934"/>
    </ligand>
</feature>
<feature type="binding site" evidence="1">
    <location>
        <begin position="87"/>
        <end position="88"/>
    </location>
    <ligand>
        <name>(2S)-2-hydroxy-3-oxobutyl phosphate</name>
        <dbReference type="ChEBI" id="CHEBI:58830"/>
    </ligand>
</feature>
<feature type="binding site" evidence="1">
    <location>
        <position position="115"/>
    </location>
    <ligand>
        <name>5-amino-6-(D-ribitylamino)uracil</name>
        <dbReference type="ChEBI" id="CHEBI:15934"/>
    </ligand>
</feature>
<feature type="binding site" evidence="1">
    <location>
        <position position="129"/>
    </location>
    <ligand>
        <name>(2S)-2-hydroxy-3-oxobutyl phosphate</name>
        <dbReference type="ChEBI" id="CHEBI:58830"/>
    </ligand>
</feature>
<reference key="1">
    <citation type="journal article" date="2009" name="J. Bacteriol.">
        <title>Genome sequence of Azotobacter vinelandii, an obligate aerobe specialized to support diverse anaerobic metabolic processes.</title>
        <authorList>
            <person name="Setubal J.C."/>
            <person name="Dos Santos P."/>
            <person name="Goldman B.S."/>
            <person name="Ertesvaag H."/>
            <person name="Espin G."/>
            <person name="Rubio L.M."/>
            <person name="Valla S."/>
            <person name="Almeida N.F."/>
            <person name="Balasubramanian D."/>
            <person name="Cromes L."/>
            <person name="Curatti L."/>
            <person name="Du Z."/>
            <person name="Godsy E."/>
            <person name="Goodner B."/>
            <person name="Hellner-Burris K."/>
            <person name="Hernandez J.A."/>
            <person name="Houmiel K."/>
            <person name="Imperial J."/>
            <person name="Kennedy C."/>
            <person name="Larson T.J."/>
            <person name="Latreille P."/>
            <person name="Ligon L.S."/>
            <person name="Lu J."/>
            <person name="Maerk M."/>
            <person name="Miller N.M."/>
            <person name="Norton S."/>
            <person name="O'Carroll I.P."/>
            <person name="Paulsen I."/>
            <person name="Raulfs E.C."/>
            <person name="Roemer R."/>
            <person name="Rosser J."/>
            <person name="Segura D."/>
            <person name="Slater S."/>
            <person name="Stricklin S.L."/>
            <person name="Studholme D.J."/>
            <person name="Sun J."/>
            <person name="Viana C.J."/>
            <person name="Wallin E."/>
            <person name="Wang B."/>
            <person name="Wheeler C."/>
            <person name="Zhu H."/>
            <person name="Dean D.R."/>
            <person name="Dixon R."/>
            <person name="Wood D."/>
        </authorList>
    </citation>
    <scope>NUCLEOTIDE SEQUENCE [LARGE SCALE GENOMIC DNA]</scope>
    <source>
        <strain>DJ / ATCC BAA-1303</strain>
    </source>
</reference>
<evidence type="ECO:0000255" key="1">
    <source>
        <dbReference type="HAMAP-Rule" id="MF_00178"/>
    </source>
</evidence>